<reference key="1">
    <citation type="journal article" date="2006" name="Proc. Natl. Acad. Sci. U.S.A.">
        <title>The complete genome of Rhodococcus sp. RHA1 provides insights into a catabolic powerhouse.</title>
        <authorList>
            <person name="McLeod M.P."/>
            <person name="Warren R.L."/>
            <person name="Hsiao W.W.L."/>
            <person name="Araki N."/>
            <person name="Myhre M."/>
            <person name="Fernandes C."/>
            <person name="Miyazawa D."/>
            <person name="Wong W."/>
            <person name="Lillquist A.L."/>
            <person name="Wang D."/>
            <person name="Dosanjh M."/>
            <person name="Hara H."/>
            <person name="Petrescu A."/>
            <person name="Morin R.D."/>
            <person name="Yang G."/>
            <person name="Stott J.M."/>
            <person name="Schein J.E."/>
            <person name="Shin H."/>
            <person name="Smailus D."/>
            <person name="Siddiqui A.S."/>
            <person name="Marra M.A."/>
            <person name="Jones S.J.M."/>
            <person name="Holt R."/>
            <person name="Brinkman F.S.L."/>
            <person name="Miyauchi K."/>
            <person name="Fukuda M."/>
            <person name="Davies J.E."/>
            <person name="Mohn W.W."/>
            <person name="Eltis L.D."/>
        </authorList>
    </citation>
    <scope>NUCLEOTIDE SEQUENCE [LARGE SCALE GENOMIC DNA]</scope>
    <source>
        <strain>RHA1</strain>
    </source>
</reference>
<accession>Q0S6U9</accession>
<name>SSUB2_RHOJR</name>
<keyword id="KW-0067">ATP-binding</keyword>
<keyword id="KW-1003">Cell membrane</keyword>
<keyword id="KW-0472">Membrane</keyword>
<keyword id="KW-0547">Nucleotide-binding</keyword>
<keyword id="KW-1278">Translocase</keyword>
<keyword id="KW-0813">Transport</keyword>
<proteinExistence type="inferred from homology"/>
<feature type="chain" id="PRO_0000279955" description="Aliphatic sulfonates import ATP-binding protein SsuB 2">
    <location>
        <begin position="1"/>
        <end position="244"/>
    </location>
</feature>
<feature type="domain" description="ABC transporter" evidence="1">
    <location>
        <begin position="13"/>
        <end position="229"/>
    </location>
</feature>
<feature type="binding site" evidence="1">
    <location>
        <begin position="45"/>
        <end position="52"/>
    </location>
    <ligand>
        <name>ATP</name>
        <dbReference type="ChEBI" id="CHEBI:30616"/>
    </ligand>
</feature>
<gene>
    <name evidence="1" type="primary">ssuB2</name>
    <name type="ordered locus">RHA1_ro04956</name>
</gene>
<evidence type="ECO:0000255" key="1">
    <source>
        <dbReference type="HAMAP-Rule" id="MF_01724"/>
    </source>
</evidence>
<dbReference type="EC" id="7.6.2.14" evidence="1"/>
<dbReference type="EMBL" id="CP000431">
    <property type="protein sequence ID" value="ABG96737.1"/>
    <property type="molecule type" value="Genomic_DNA"/>
</dbReference>
<dbReference type="RefSeq" id="WP_011597237.1">
    <property type="nucleotide sequence ID" value="NC_008268.1"/>
</dbReference>
<dbReference type="SMR" id="Q0S6U9"/>
<dbReference type="KEGG" id="rha:RHA1_ro04956"/>
<dbReference type="PATRIC" id="fig|101510.16.peg.5005"/>
<dbReference type="eggNOG" id="COG1116">
    <property type="taxonomic scope" value="Bacteria"/>
</dbReference>
<dbReference type="HOGENOM" id="CLU_000604_1_22_11"/>
<dbReference type="OrthoDB" id="8773773at2"/>
<dbReference type="Proteomes" id="UP000008710">
    <property type="component" value="Chromosome"/>
</dbReference>
<dbReference type="GO" id="GO:0005886">
    <property type="term" value="C:plasma membrane"/>
    <property type="evidence" value="ECO:0007669"/>
    <property type="project" value="UniProtKB-SubCell"/>
</dbReference>
<dbReference type="GO" id="GO:0005524">
    <property type="term" value="F:ATP binding"/>
    <property type="evidence" value="ECO:0007669"/>
    <property type="project" value="UniProtKB-KW"/>
</dbReference>
<dbReference type="GO" id="GO:0016887">
    <property type="term" value="F:ATP hydrolysis activity"/>
    <property type="evidence" value="ECO:0007669"/>
    <property type="project" value="InterPro"/>
</dbReference>
<dbReference type="Gene3D" id="3.40.50.300">
    <property type="entry name" value="P-loop containing nucleotide triphosphate hydrolases"/>
    <property type="match status" value="1"/>
</dbReference>
<dbReference type="InterPro" id="IPR003593">
    <property type="entry name" value="AAA+_ATPase"/>
</dbReference>
<dbReference type="InterPro" id="IPR003439">
    <property type="entry name" value="ABC_transporter-like_ATP-bd"/>
</dbReference>
<dbReference type="InterPro" id="IPR017871">
    <property type="entry name" value="ABC_transporter-like_CS"/>
</dbReference>
<dbReference type="InterPro" id="IPR050166">
    <property type="entry name" value="ABC_transporter_ATP-bind"/>
</dbReference>
<dbReference type="InterPro" id="IPR027417">
    <property type="entry name" value="P-loop_NTPase"/>
</dbReference>
<dbReference type="PANTHER" id="PTHR42788:SF17">
    <property type="entry name" value="ALIPHATIC SULFONATES IMPORT ATP-BINDING PROTEIN SSUB"/>
    <property type="match status" value="1"/>
</dbReference>
<dbReference type="PANTHER" id="PTHR42788">
    <property type="entry name" value="TAURINE IMPORT ATP-BINDING PROTEIN-RELATED"/>
    <property type="match status" value="1"/>
</dbReference>
<dbReference type="Pfam" id="PF00005">
    <property type="entry name" value="ABC_tran"/>
    <property type="match status" value="1"/>
</dbReference>
<dbReference type="SMART" id="SM00382">
    <property type="entry name" value="AAA"/>
    <property type="match status" value="1"/>
</dbReference>
<dbReference type="SUPFAM" id="SSF52540">
    <property type="entry name" value="P-loop containing nucleoside triphosphate hydrolases"/>
    <property type="match status" value="1"/>
</dbReference>
<dbReference type="PROSITE" id="PS00211">
    <property type="entry name" value="ABC_TRANSPORTER_1"/>
    <property type="match status" value="1"/>
</dbReference>
<dbReference type="PROSITE" id="PS50893">
    <property type="entry name" value="ABC_TRANSPORTER_2"/>
    <property type="match status" value="1"/>
</dbReference>
<dbReference type="PROSITE" id="PS51291">
    <property type="entry name" value="SSUB"/>
    <property type="match status" value="1"/>
</dbReference>
<comment type="function">
    <text evidence="1">Part of the ABC transporter complex SsuABC involved in aliphatic sulfonates import. Responsible for energy coupling to the transport system.</text>
</comment>
<comment type="catalytic activity">
    <reaction evidence="1">
        <text>ATP + H2O + aliphatic sulfonate-[sulfonate-binding protein]Side 1 = ADP + phosphate + aliphatic sulfonateSide 2 + [sulfonate-binding protein]Side 1.</text>
        <dbReference type="EC" id="7.6.2.14"/>
    </reaction>
</comment>
<comment type="subunit">
    <text evidence="1">The complex is composed of two ATP-binding proteins (SsuB), two transmembrane proteins (SsuC) and a solute-binding protein (SsuA).</text>
</comment>
<comment type="subcellular location">
    <subcellularLocation>
        <location evidence="1">Cell membrane</location>
        <topology evidence="1">Peripheral membrane protein</topology>
    </subcellularLocation>
</comment>
<comment type="similarity">
    <text evidence="1">Belongs to the ABC transporter superfamily. Aliphatic sulfonates importer (TC 3.A.1.17.2) family.</text>
</comment>
<protein>
    <recommendedName>
        <fullName evidence="1">Aliphatic sulfonates import ATP-binding protein SsuB 2</fullName>
        <ecNumber evidence="1">7.6.2.14</ecNumber>
    </recommendedName>
</protein>
<sequence length="244" mass="26373">MAQDARRLEPAAVQVRSLVRGFGDKTVLDRLDLDIPEGQFVALLGKSGSGKSTLLRALAGLDYDVEGRGGTLTVPEEVSVAFQDSRLLPWLKVLDNVTLGLGRTGTSRGAAALAEVGLAGREKAWPSELSGGEQQRVALARALVREPRLFLADEPFGALDALTRIKMHALLQELIRRHRPTVLLVTHDVDEAIALADRVLVLDRGQIVVDEIIDIPKPRALGDSKFHEFRTTLLGALGVEVAAQ</sequence>
<organism>
    <name type="scientific">Rhodococcus jostii (strain RHA1)</name>
    <dbReference type="NCBI Taxonomy" id="101510"/>
    <lineage>
        <taxon>Bacteria</taxon>
        <taxon>Bacillati</taxon>
        <taxon>Actinomycetota</taxon>
        <taxon>Actinomycetes</taxon>
        <taxon>Mycobacteriales</taxon>
        <taxon>Nocardiaceae</taxon>
        <taxon>Rhodococcus</taxon>
    </lineage>
</organism>